<evidence type="ECO:0000250" key="1"/>
<evidence type="ECO:0000256" key="2">
    <source>
        <dbReference type="SAM" id="MobiDB-lite"/>
    </source>
</evidence>
<evidence type="ECO:0000269" key="3">
    <source>
    </source>
</evidence>
<evidence type="ECO:0000269" key="4">
    <source>
    </source>
</evidence>
<evidence type="ECO:0000269" key="5">
    <source>
    </source>
</evidence>
<evidence type="ECO:0000269" key="6">
    <source>
    </source>
</evidence>
<evidence type="ECO:0000269" key="7">
    <source>
    </source>
</evidence>
<evidence type="ECO:0000269" key="8">
    <source>
    </source>
</evidence>
<evidence type="ECO:0000269" key="9">
    <source>
    </source>
</evidence>
<evidence type="ECO:0000269" key="10">
    <source>
    </source>
</evidence>
<evidence type="ECO:0000269" key="11">
    <source>
    </source>
</evidence>
<evidence type="ECO:0000269" key="12">
    <source>
    </source>
</evidence>
<evidence type="ECO:0000269" key="13">
    <source>
    </source>
</evidence>
<evidence type="ECO:0000303" key="14">
    <source>
    </source>
</evidence>
<evidence type="ECO:0000305" key="15"/>
<evidence type="ECO:0007829" key="16">
    <source>
        <dbReference type="PDB" id="2FIM"/>
    </source>
</evidence>
<evidence type="ECO:0007829" key="17">
    <source>
        <dbReference type="PDB" id="3C5N"/>
    </source>
</evidence>
<sequence>MPLRDETLREVWASDSGHEEESLSPEAPRRPKQRPAPAQRLRKKRTEAPESPCPTGSKPRKPGAGRTGRPREEPSPDPAQARAPQTVYARFLRDPEAKKRDPRETFLVARAPDAEDEEEEEEEDEEDEEEEAEEKKEKILLPPKKPLREKSSADLKERRAKAQGPRGDLGSPDPPPKPLRVRNKEAPAGEGTKMRKTKKKGSGEADKDPSGSPASARKSPAAMFLVGEGSPDKKALKKKGTPKGARKEEEEEEEAATVIKKSNQKGKAKGKGKKKAKEERAPSPPVEVDEPREFVLRPAPQGRTVRCRLTRDKKGMDRGMYPSYFLHLDTEKKVFLLAGRKRKRSKTANYLISIDPTNLSRGGENFIGKLRSNLLGNRFTVFDNGQNPQRGYSTNVASLRQELAAVIYETNVLGFRGPRRMTVIIPGMSAENERVPIRPRNASDGLLVRWQNKTLESLIELHNKPPVWNDDSGSYTLNFQGRVTQASVKNFQIVHADDPDYIVLQFGRVAEDAFTLDYRYPLCALQAFAIALSSFDGKLACE</sequence>
<dbReference type="EMBL" id="U82468">
    <property type="protein sequence ID" value="AAB53700.1"/>
    <property type="molecule type" value="mRNA"/>
</dbReference>
<dbReference type="EMBL" id="AF034923">
    <property type="protein sequence ID" value="AAB97966.1"/>
    <property type="molecule type" value="Genomic_DNA"/>
</dbReference>
<dbReference type="EMBL" id="AF034919">
    <property type="protein sequence ID" value="AAB97966.1"/>
    <property type="status" value="JOINED"/>
    <property type="molecule type" value="Genomic_DNA"/>
</dbReference>
<dbReference type="EMBL" id="AF034920">
    <property type="protein sequence ID" value="AAB97966.1"/>
    <property type="status" value="JOINED"/>
    <property type="molecule type" value="Genomic_DNA"/>
</dbReference>
<dbReference type="EMBL" id="AF034921">
    <property type="protein sequence ID" value="AAB97966.1"/>
    <property type="status" value="JOINED"/>
    <property type="molecule type" value="Genomic_DNA"/>
</dbReference>
<dbReference type="EMBL" id="AF034922">
    <property type="protein sequence ID" value="AAB97966.1"/>
    <property type="status" value="JOINED"/>
    <property type="molecule type" value="Genomic_DNA"/>
</dbReference>
<dbReference type="EMBL" id="AL033519">
    <property type="status" value="NOT_ANNOTATED_CDS"/>
    <property type="molecule type" value="Genomic_DNA"/>
</dbReference>
<dbReference type="EMBL" id="BC032714">
    <property type="protein sequence ID" value="AAH32714.1"/>
    <property type="molecule type" value="mRNA"/>
</dbReference>
<dbReference type="EMBL" id="BC065261">
    <property type="protein sequence ID" value="AAH65261.1"/>
    <property type="molecule type" value="mRNA"/>
</dbReference>
<dbReference type="CCDS" id="CCDS4807.1">
    <molecule id="O00294-1"/>
</dbReference>
<dbReference type="CCDS" id="CCDS75436.1">
    <molecule id="O00294-2"/>
</dbReference>
<dbReference type="RefSeq" id="NP_001276324.1">
    <molecule id="O00294-2"/>
    <property type="nucleotide sequence ID" value="NM_001289395.2"/>
</dbReference>
<dbReference type="RefSeq" id="NP_003313.3">
    <molecule id="O00294-1"/>
    <property type="nucleotide sequence ID" value="NM_003322.5"/>
</dbReference>
<dbReference type="PDB" id="2FIM">
    <property type="method" value="X-ray"/>
    <property type="resolution" value="1.90 A"/>
    <property type="chains" value="A/B=290-542"/>
</dbReference>
<dbReference type="PDB" id="3C5N">
    <property type="method" value="X-ray"/>
    <property type="resolution" value="1.80 A"/>
    <property type="chains" value="A/B=291-536"/>
</dbReference>
<dbReference type="PDBsum" id="2FIM"/>
<dbReference type="PDBsum" id="3C5N"/>
<dbReference type="SMR" id="O00294"/>
<dbReference type="BioGRID" id="113138">
    <property type="interactions" value="3"/>
</dbReference>
<dbReference type="FunCoup" id="O00294">
    <property type="interactions" value="8"/>
</dbReference>
<dbReference type="IntAct" id="O00294">
    <property type="interactions" value="6"/>
</dbReference>
<dbReference type="STRING" id="9606.ENSP00000229771"/>
<dbReference type="GlyGen" id="O00294">
    <property type="glycosylation" value="1 site, 1 O-linked glycan (1 site)"/>
</dbReference>
<dbReference type="iPTMnet" id="O00294"/>
<dbReference type="PhosphoSitePlus" id="O00294"/>
<dbReference type="BioMuta" id="TULP1"/>
<dbReference type="MassIVE" id="O00294"/>
<dbReference type="PaxDb" id="9606-ENSP00000229771"/>
<dbReference type="PeptideAtlas" id="O00294"/>
<dbReference type="ProteomicsDB" id="47825">
    <molecule id="O00294-1"/>
</dbReference>
<dbReference type="ProteomicsDB" id="47826">
    <molecule id="O00294-2"/>
</dbReference>
<dbReference type="Antibodypedia" id="45745">
    <property type="antibodies" value="97 antibodies from 20 providers"/>
</dbReference>
<dbReference type="DNASU" id="7287"/>
<dbReference type="Ensembl" id="ENST00000229771.11">
    <molecule id="O00294-1"/>
    <property type="protein sequence ID" value="ENSP00000229771.6"/>
    <property type="gene ID" value="ENSG00000112041.13"/>
</dbReference>
<dbReference type="Ensembl" id="ENST00000322263.8">
    <molecule id="O00294-2"/>
    <property type="protein sequence ID" value="ENSP00000319414.4"/>
    <property type="gene ID" value="ENSG00000112041.13"/>
</dbReference>
<dbReference type="GeneID" id="7287"/>
<dbReference type="KEGG" id="hsa:7287"/>
<dbReference type="MANE-Select" id="ENST00000229771.11">
    <property type="protein sequence ID" value="ENSP00000229771.6"/>
    <property type="RefSeq nucleotide sequence ID" value="NM_003322.6"/>
    <property type="RefSeq protein sequence ID" value="NP_003313.3"/>
</dbReference>
<dbReference type="UCSC" id="uc003okv.6">
    <molecule id="O00294-1"/>
    <property type="organism name" value="human"/>
</dbReference>
<dbReference type="AGR" id="HGNC:12423"/>
<dbReference type="CTD" id="7287"/>
<dbReference type="DisGeNET" id="7287"/>
<dbReference type="GeneCards" id="TULP1"/>
<dbReference type="GeneReviews" id="TULP1"/>
<dbReference type="HGNC" id="HGNC:12423">
    <property type="gene designation" value="TULP1"/>
</dbReference>
<dbReference type="HPA" id="ENSG00000112041">
    <property type="expression patterns" value="Tissue enriched (retina)"/>
</dbReference>
<dbReference type="MalaCards" id="TULP1"/>
<dbReference type="MIM" id="600132">
    <property type="type" value="phenotype"/>
</dbReference>
<dbReference type="MIM" id="602280">
    <property type="type" value="gene"/>
</dbReference>
<dbReference type="MIM" id="613843">
    <property type="type" value="phenotype"/>
</dbReference>
<dbReference type="neXtProt" id="NX_O00294"/>
<dbReference type="OpenTargets" id="ENSG00000112041"/>
<dbReference type="Orphanet" id="65">
    <property type="disease" value="Leber congenital amaurosis"/>
</dbReference>
<dbReference type="Orphanet" id="791">
    <property type="disease" value="Retinitis pigmentosa"/>
</dbReference>
<dbReference type="PharmGKB" id="PA37085"/>
<dbReference type="VEuPathDB" id="HostDB:ENSG00000112041"/>
<dbReference type="eggNOG" id="KOG2502">
    <property type="taxonomic scope" value="Eukaryota"/>
</dbReference>
<dbReference type="GeneTree" id="ENSGT00940000158771"/>
<dbReference type="HOGENOM" id="CLU_028236_5_1_1"/>
<dbReference type="InParanoid" id="O00294"/>
<dbReference type="OMA" id="YAKFIRD"/>
<dbReference type="OrthoDB" id="8775810at2759"/>
<dbReference type="PAN-GO" id="O00294">
    <property type="GO annotations" value="3 GO annotations based on evolutionary models"/>
</dbReference>
<dbReference type="PhylomeDB" id="O00294"/>
<dbReference type="TreeFam" id="TF314076"/>
<dbReference type="PathwayCommons" id="O00294"/>
<dbReference type="SignaLink" id="O00294"/>
<dbReference type="BioGRID-ORCS" id="7287">
    <property type="hits" value="42 hits in 1163 CRISPR screens"/>
</dbReference>
<dbReference type="EvolutionaryTrace" id="O00294"/>
<dbReference type="GeneWiki" id="TULP1"/>
<dbReference type="GenomeRNAi" id="7287"/>
<dbReference type="Pharos" id="O00294">
    <property type="development level" value="Tbio"/>
</dbReference>
<dbReference type="PRO" id="PR:O00294"/>
<dbReference type="Proteomes" id="UP000005640">
    <property type="component" value="Chromosome 6"/>
</dbReference>
<dbReference type="RNAct" id="O00294">
    <property type="molecule type" value="protein"/>
</dbReference>
<dbReference type="Bgee" id="ENSG00000112041">
    <property type="expression patterns" value="Expressed in primordial germ cell in gonad and 96 other cell types or tissues"/>
</dbReference>
<dbReference type="ExpressionAtlas" id="O00294">
    <property type="expression patterns" value="baseline and differential"/>
</dbReference>
<dbReference type="GO" id="GO:0043679">
    <property type="term" value="C:axon terminus"/>
    <property type="evidence" value="ECO:0007669"/>
    <property type="project" value="Ensembl"/>
</dbReference>
<dbReference type="GO" id="GO:0042995">
    <property type="term" value="C:cell projection"/>
    <property type="evidence" value="ECO:0000314"/>
    <property type="project" value="UniProtKB"/>
</dbReference>
<dbReference type="GO" id="GO:0005929">
    <property type="term" value="C:cilium"/>
    <property type="evidence" value="ECO:0000318"/>
    <property type="project" value="GO_Central"/>
</dbReference>
<dbReference type="GO" id="GO:0005829">
    <property type="term" value="C:cytosol"/>
    <property type="evidence" value="ECO:0007669"/>
    <property type="project" value="Ensembl"/>
</dbReference>
<dbReference type="GO" id="GO:0005576">
    <property type="term" value="C:extracellular region"/>
    <property type="evidence" value="ECO:0007669"/>
    <property type="project" value="UniProtKB-SubCell"/>
</dbReference>
<dbReference type="GO" id="GO:0001917">
    <property type="term" value="C:photoreceptor inner segment"/>
    <property type="evidence" value="ECO:0000250"/>
    <property type="project" value="UniProtKB"/>
</dbReference>
<dbReference type="GO" id="GO:0001750">
    <property type="term" value="C:photoreceptor outer segment"/>
    <property type="evidence" value="ECO:0000250"/>
    <property type="project" value="UniProtKB"/>
</dbReference>
<dbReference type="GO" id="GO:0005886">
    <property type="term" value="C:plasma membrane"/>
    <property type="evidence" value="ECO:0000314"/>
    <property type="project" value="UniProtKB"/>
</dbReference>
<dbReference type="GO" id="GO:0045202">
    <property type="term" value="C:synapse"/>
    <property type="evidence" value="ECO:0000250"/>
    <property type="project" value="UniProtKB"/>
</dbReference>
<dbReference type="GO" id="GO:0051015">
    <property type="term" value="F:actin filament binding"/>
    <property type="evidence" value="ECO:0000314"/>
    <property type="project" value="UniProtKB"/>
</dbReference>
<dbReference type="GO" id="GO:0005546">
    <property type="term" value="F:phosphatidylinositol-4,5-bisphosphate binding"/>
    <property type="evidence" value="ECO:0000314"/>
    <property type="project" value="UniProtKB"/>
</dbReference>
<dbReference type="GO" id="GO:0016358">
    <property type="term" value="P:dendrite development"/>
    <property type="evidence" value="ECO:0000250"/>
    <property type="project" value="UniProtKB"/>
</dbReference>
<dbReference type="GO" id="GO:0050908">
    <property type="term" value="P:detection of light stimulus involved in visual perception"/>
    <property type="evidence" value="ECO:0000315"/>
    <property type="project" value="UniProtKB"/>
</dbReference>
<dbReference type="GO" id="GO:0042462">
    <property type="term" value="P:eye photoreceptor cell development"/>
    <property type="evidence" value="ECO:0000250"/>
    <property type="project" value="UniProtKB"/>
</dbReference>
<dbReference type="GO" id="GO:0006910">
    <property type="term" value="P:phagocytosis, recognition"/>
    <property type="evidence" value="ECO:0007669"/>
    <property type="project" value="Ensembl"/>
</dbReference>
<dbReference type="GO" id="GO:0045494">
    <property type="term" value="P:photoreceptor cell maintenance"/>
    <property type="evidence" value="ECO:0000250"/>
    <property type="project" value="UniProtKB"/>
</dbReference>
<dbReference type="GO" id="GO:0050766">
    <property type="term" value="P:positive regulation of phagocytosis"/>
    <property type="evidence" value="ECO:0000314"/>
    <property type="project" value="UniProtKB"/>
</dbReference>
<dbReference type="GO" id="GO:0061512">
    <property type="term" value="P:protein localization to cilium"/>
    <property type="evidence" value="ECO:0000318"/>
    <property type="project" value="GO_Central"/>
</dbReference>
<dbReference type="GO" id="GO:1903546">
    <property type="term" value="P:protein localization to photoreceptor outer segment"/>
    <property type="evidence" value="ECO:0007669"/>
    <property type="project" value="Ensembl"/>
</dbReference>
<dbReference type="GO" id="GO:0060041">
    <property type="term" value="P:retina development in camera-type eye"/>
    <property type="evidence" value="ECO:0007669"/>
    <property type="project" value="Ensembl"/>
</dbReference>
<dbReference type="GO" id="GO:0001895">
    <property type="term" value="P:retina homeostasis"/>
    <property type="evidence" value="ECO:0000315"/>
    <property type="project" value="UniProtKB"/>
</dbReference>
<dbReference type="GO" id="GO:0007601">
    <property type="term" value="P:visual perception"/>
    <property type="evidence" value="ECO:0000304"/>
    <property type="project" value="ProtInc"/>
</dbReference>
<dbReference type="FunFam" id="3.20.90.10:FF:000001">
    <property type="entry name" value="Tubby-like protein"/>
    <property type="match status" value="1"/>
</dbReference>
<dbReference type="Gene3D" id="3.20.90.10">
    <property type="entry name" value="Tubby Protein, Chain A"/>
    <property type="match status" value="1"/>
</dbReference>
<dbReference type="InterPro" id="IPR025659">
    <property type="entry name" value="Tubby-like_C"/>
</dbReference>
<dbReference type="InterPro" id="IPR000007">
    <property type="entry name" value="Tubby_C"/>
</dbReference>
<dbReference type="InterPro" id="IPR018066">
    <property type="entry name" value="Tubby_C_CS"/>
</dbReference>
<dbReference type="PANTHER" id="PTHR16517">
    <property type="entry name" value="TUBBY-RELATED"/>
    <property type="match status" value="1"/>
</dbReference>
<dbReference type="PANTHER" id="PTHR16517:SF12">
    <property type="entry name" value="TUBBY-RELATED PROTEIN 1"/>
    <property type="match status" value="1"/>
</dbReference>
<dbReference type="Pfam" id="PF01167">
    <property type="entry name" value="Tub"/>
    <property type="match status" value="1"/>
</dbReference>
<dbReference type="PRINTS" id="PR01573">
    <property type="entry name" value="SUPERTUBBY"/>
</dbReference>
<dbReference type="SUPFAM" id="SSF54518">
    <property type="entry name" value="Tubby C-terminal domain-like"/>
    <property type="match status" value="1"/>
</dbReference>
<dbReference type="PROSITE" id="PS01200">
    <property type="entry name" value="TUB_1"/>
    <property type="match status" value="1"/>
</dbReference>
<dbReference type="PROSITE" id="PS01201">
    <property type="entry name" value="TUB_2"/>
    <property type="match status" value="1"/>
</dbReference>
<feature type="chain" id="PRO_0000186466" description="Tubby-related protein 1">
    <location>
        <begin position="1"/>
        <end position="542"/>
    </location>
</feature>
<feature type="region of interest" description="Disordered" evidence="2">
    <location>
        <begin position="1"/>
        <end position="289"/>
    </location>
</feature>
<feature type="compositionally biased region" description="Basic and acidic residues" evidence="2">
    <location>
        <begin position="91"/>
        <end position="104"/>
    </location>
</feature>
<feature type="compositionally biased region" description="Acidic residues" evidence="2">
    <location>
        <begin position="114"/>
        <end position="132"/>
    </location>
</feature>
<feature type="compositionally biased region" description="Basic and acidic residues" evidence="2">
    <location>
        <begin position="146"/>
        <end position="157"/>
    </location>
</feature>
<feature type="compositionally biased region" description="Basic residues" evidence="2">
    <location>
        <begin position="262"/>
        <end position="275"/>
    </location>
</feature>
<feature type="splice variant" id="VSP_023031" description="In isoform 2." evidence="14">
    <location>
        <begin position="64"/>
        <end position="116"/>
    </location>
</feature>
<feature type="sequence variant" id="VAR_008274" description="In dbSNP:rs7764472." evidence="10 12">
    <original>T</original>
    <variation>R</variation>
    <location>
        <position position="67"/>
    </location>
</feature>
<feature type="sequence variant" id="VAR_013310" description="In RP14." evidence="13">
    <location>
        <begin position="120"/>
        <end position="127"/>
    </location>
</feature>
<feature type="sequence variant" id="VAR_008275" description="In RP14; dbSNP:rs62636707.">
    <original>A</original>
    <variation>V</variation>
    <location>
        <position position="245"/>
    </location>
</feature>
<feature type="sequence variant" id="VAR_008276" description="In dbSNP:rs2064317." evidence="8">
    <original>I</original>
    <variation>T</variation>
    <location>
        <position position="259"/>
    </location>
</feature>
<feature type="sequence variant" id="VAR_034575" description="In dbSNP:rs2064318." evidence="4 8 10 12">
    <original>K</original>
    <variation>N</variation>
    <location>
        <position position="261"/>
    </location>
</feature>
<feature type="sequence variant" id="VAR_008277" description="In RP14.">
    <original>K</original>
    <variation>T</variation>
    <location>
        <position position="261"/>
    </location>
</feature>
<feature type="sequence variant" id="VAR_065500" description="In LCA15; dbSNP:rs387906837." evidence="3">
    <original>G</original>
    <variation>W</variation>
    <location>
        <position position="368"/>
    </location>
</feature>
<feature type="sequence variant" id="VAR_008278" description="In RP14; dbSNP:rs148749577.">
    <original>R</original>
    <variation>H</variation>
    <location>
        <position position="378"/>
    </location>
</feature>
<feature type="sequence variant" id="VAR_037584" description="In RP14; dbSNP:rs121909076." evidence="5">
    <original>F</original>
    <variation>S</variation>
    <location>
        <position position="382"/>
    </location>
</feature>
<feature type="sequence variant" id="VAR_065501" description="In LCA15; dbSNP:rs387906836." evidence="3">
    <original>R</original>
    <variation>W</variation>
    <location>
        <position position="400"/>
    </location>
</feature>
<feature type="sequence variant" id="VAR_007941" description="In RP14; no effect on RPE phagocytosis; dbSNP:rs121909073." evidence="9 11">
    <original>R</original>
    <variation>P</variation>
    <location>
        <position position="420"/>
    </location>
</feature>
<feature type="sequence variant" id="VAR_008279" description="In RP14; dbSNP:rs138200747.">
    <original>T</original>
    <variation>M</variation>
    <location>
        <position position="454"/>
    </location>
</feature>
<feature type="sequence variant" id="VAR_007942" description="In RP14; no effect on RPE phagocytosis; dbSNP:rs121909075." evidence="9 11">
    <original>I</original>
    <variation>K</variation>
    <location>
        <position position="459"/>
    </location>
</feature>
<feature type="sequence variant" id="VAR_065502" description="In RP14; dbSNP:rs121909077." evidence="7">
    <original>R</original>
    <variation>W</variation>
    <location>
        <position position="482"/>
    </location>
</feature>
<feature type="sequence variant" id="VAR_008280" description="In RP14; abolishes RPE phagocytosis; dbSNP:rs62636511." evidence="9 13">
    <original>K</original>
    <variation>R</variation>
    <location>
        <position position="489"/>
    </location>
</feature>
<feature type="sequence variant" id="VAR_007943" description="In RP14; abolishes RPE phagocytosis; dbSNP:rs121909074." evidence="9 11">
    <original>F</original>
    <variation>L</variation>
    <location>
        <position position="491"/>
    </location>
</feature>
<feature type="sequence variant" id="VAR_008281" description="In RP14; uncertain significance; dbSNP:rs141980901." evidence="8 13">
    <original>A</original>
    <variation>T</variation>
    <location>
        <position position="496"/>
    </location>
</feature>
<feature type="sequence variant" id="VAR_065503" description="In LCA15." evidence="8">
    <original>A</original>
    <variation>AFA</variation>
    <location>
        <position position="529"/>
    </location>
</feature>
<feature type="helix" evidence="17">
    <location>
        <begin position="294"/>
        <end position="296"/>
    </location>
</feature>
<feature type="strand" evidence="17">
    <location>
        <begin position="304"/>
        <end position="311"/>
    </location>
</feature>
<feature type="strand" evidence="17">
    <location>
        <begin position="323"/>
        <end position="332"/>
    </location>
</feature>
<feature type="strand" evidence="17">
    <location>
        <begin position="335"/>
        <end position="341"/>
    </location>
</feature>
<feature type="strand" evidence="17">
    <location>
        <begin position="349"/>
        <end position="354"/>
    </location>
</feature>
<feature type="strand" evidence="17">
    <location>
        <begin position="366"/>
        <end position="372"/>
    </location>
</feature>
<feature type="strand" evidence="17">
    <location>
        <begin position="374"/>
        <end position="382"/>
    </location>
</feature>
<feature type="strand" evidence="16">
    <location>
        <begin position="384"/>
        <end position="386"/>
    </location>
</feature>
<feature type="helix" evidence="17">
    <location>
        <begin position="388"/>
        <end position="390"/>
    </location>
</feature>
<feature type="helix" evidence="17">
    <location>
        <begin position="396"/>
        <end position="398"/>
    </location>
</feature>
<feature type="strand" evidence="17">
    <location>
        <begin position="402"/>
        <end position="408"/>
    </location>
</feature>
<feature type="strand" evidence="17">
    <location>
        <begin position="414"/>
        <end position="416"/>
    </location>
</feature>
<feature type="strand" evidence="17">
    <location>
        <begin position="421"/>
        <end position="426"/>
    </location>
</feature>
<feature type="helix" evidence="17">
    <location>
        <begin position="446"/>
        <end position="452"/>
    </location>
</feature>
<feature type="strand" evidence="17">
    <location>
        <begin position="458"/>
        <end position="463"/>
    </location>
</feature>
<feature type="strand" evidence="17">
    <location>
        <begin position="467"/>
        <end position="469"/>
    </location>
</feature>
<feature type="turn" evidence="17">
    <location>
        <begin position="470"/>
        <end position="473"/>
    </location>
</feature>
<feature type="strand" evidence="17">
    <location>
        <begin position="474"/>
        <end position="476"/>
    </location>
</feature>
<feature type="strand" evidence="17">
    <location>
        <begin position="491"/>
        <end position="495"/>
    </location>
</feature>
<feature type="strand" evidence="17">
    <location>
        <begin position="503"/>
        <end position="510"/>
    </location>
</feature>
<feature type="strand" evidence="17">
    <location>
        <begin position="513"/>
        <end position="519"/>
    </location>
</feature>
<feature type="helix" evidence="17">
    <location>
        <begin position="524"/>
        <end position="533"/>
    </location>
</feature>
<comment type="function">
    <text evidence="1 6 9">Required for normal development of photoreceptor synapses. Required for normal photoreceptor function and for long-term survival of photoreceptor cells. Interacts with cytoskeleton proteins and may play a role in protein transport in photoreceptor cells (By similarity). Binds lipids, especially phosphatidylinositol 3-phosphate, phosphatidylinositol 4-phosphate, phosphatidylinositol 5-phosphate, phosphatidylinositol 3,4-bisphosphate, phosphatidylinositol 4,5-bisphosphate, phosphatidylinositol 3,4,5-bisphosphate, phosphatidylserine and phosphatidic acid (in vitro). Contribute to stimulation of phagocytosis of apoptotic retinal pigment epithelium (RPE) cells and macrophages.</text>
</comment>
<comment type="subunit">
    <text evidence="1 15">Homodimer (Probable). May interact with ABCF1, PSIP1, ZEB1 and HMGB2 (Potential). Interacts with DNM1 (By similarity). Interacts with F-actin. Interacts with TUB (By similarity). Interacts with TYRO3 (By similarity).</text>
</comment>
<comment type="interaction">
    <interactant intactId="EBI-1756778">
        <id>O00294</id>
    </interactant>
    <interactant intactId="EBI-389883">
        <id>P16333</id>
        <label>NCK1</label>
    </interactant>
    <organismsDiffer>false</organismsDiffer>
    <experiments>2</experiments>
</comment>
<comment type="subcellular location">
    <subcellularLocation>
        <location evidence="6">Cytoplasm</location>
    </subcellularLocation>
    <subcellularLocation>
        <location evidence="6">Cell membrane</location>
        <topology evidence="6">Peripheral membrane protein</topology>
        <orientation evidence="6">Cytoplasmic side</orientation>
    </subcellularLocation>
    <subcellularLocation>
        <location evidence="1">Secreted</location>
    </subcellularLocation>
    <subcellularLocation>
        <location evidence="1">Synapse</location>
    </subcellularLocation>
    <text evidence="1">Detected at synapses between photoreceptor cells and second-order neurons. Does not have a cleavable signal peptide and is secreted by an alternative pathway (By similarity).</text>
</comment>
<comment type="alternative products">
    <event type="alternative splicing"/>
    <isoform>
        <id>O00294-1</id>
        <name>1</name>
        <sequence type="displayed"/>
    </isoform>
    <isoform>
        <id>O00294-2</id>
        <name>2</name>
        <sequence type="described" ref="VSP_023031"/>
    </isoform>
</comment>
<comment type="tissue specificity">
    <text>Retina-specific.</text>
</comment>
<comment type="disease" evidence="5 7 9 11 13">
    <disease id="DI-00981">
        <name>Retinitis pigmentosa 14</name>
        <acronym>RP14</acronym>
        <description>A retinal dystrophy belonging to the group of pigmentary retinopathies. Retinitis pigmentosa is characterized by retinal pigment deposits visible on fundus examination and primary loss of rod photoreceptor cells followed by secondary loss of cone photoreceptors. Patients typically have night vision blindness and loss of midperipheral visual field. As their condition progresses, they lose their far peripheral visual field and eventually central vision as well.</description>
        <dbReference type="MIM" id="600132"/>
    </disease>
    <text>The disease is caused by variants affecting the gene represented in this entry.</text>
</comment>
<comment type="disease" evidence="3 8">
    <disease id="DI-03049">
        <name>Leber congenital amaurosis 15</name>
        <acronym>LCA15</acronym>
        <description>A severe dystrophy of the retina, typically becoming evident in the first years of life. Visual function is usually poor and often accompanied by nystagmus, sluggish or near-absent pupillary responses, photophobia, high hyperopia and keratoconus.</description>
        <dbReference type="MIM" id="613843"/>
    </disease>
    <text>The disease is caused by variants affecting the gene represented in this entry.</text>
</comment>
<comment type="similarity">
    <text evidence="15">Belongs to the TUB family.</text>
</comment>
<gene>
    <name type="primary">TULP1</name>
    <name type="synonym">TUBL1</name>
</gene>
<keyword id="KW-0002">3D-structure</keyword>
<keyword id="KW-0025">Alternative splicing</keyword>
<keyword id="KW-1003">Cell membrane</keyword>
<keyword id="KW-0963">Cytoplasm</keyword>
<keyword id="KW-0225">Disease variant</keyword>
<keyword id="KW-0901">Leber congenital amaurosis</keyword>
<keyword id="KW-0472">Membrane</keyword>
<keyword id="KW-0581">Phagocytosis</keyword>
<keyword id="KW-1267">Proteomics identification</keyword>
<keyword id="KW-1185">Reference proteome</keyword>
<keyword id="KW-0682">Retinitis pigmentosa</keyword>
<keyword id="KW-0964">Secreted</keyword>
<keyword id="KW-0716">Sensory transduction</keyword>
<keyword id="KW-0770">Synapse</keyword>
<keyword id="KW-0844">Vision</keyword>
<accession>O00294</accession>
<accession>O43536</accession>
<accession>Q5TGM5</accession>
<accession>Q8N571</accession>
<protein>
    <recommendedName>
        <fullName>Tubby-related protein 1</fullName>
    </recommendedName>
    <alternativeName>
        <fullName>Tubby-like protein 1</fullName>
    </alternativeName>
</protein>
<reference key="1">
    <citation type="journal article" date="1997" name="Proc. Natl. Acad. Sci. U.S.A.">
        <title>Molecular characterization of TUB, TULP1, and TULP2, members of the novel tubby gene family and their possible relation to ocular diseases.</title>
        <authorList>
            <person name="North M.A."/>
            <person name="Naggert J.K."/>
            <person name="Yan Y."/>
            <person name="Noben-Trauth K."/>
            <person name="Nishina P.M."/>
        </authorList>
    </citation>
    <scope>NUCLEOTIDE SEQUENCE [MRNA] (ISOFORM 1)</scope>
    <scope>VARIANTS ARG-67 AND ASN-261</scope>
    <source>
        <tissue>Retina</tissue>
    </source>
</reference>
<reference key="2">
    <citation type="journal article" date="1998" name="Nat. Genet.">
        <title>TULP1 mutation in two extended Dominican kindreds with autosomal recessive retinitis pigmentosa.</title>
        <authorList>
            <person name="Banerjee P."/>
            <person name="Kleyn P.W."/>
            <person name="Knowles J.A."/>
            <person name="Lewis C.A."/>
            <person name="Ross B.M."/>
            <person name="Parano E."/>
            <person name="Kovats S.G."/>
            <person name="Lee J.J."/>
            <person name="Penchaszadeh G.K."/>
            <person name="Ott J."/>
            <person name="Jacobson S.G."/>
            <person name="Gilliam T.C."/>
        </authorList>
    </citation>
    <scope>NUCLEOTIDE SEQUENCE [GENOMIC DNA]</scope>
    <scope>VARIANTS ARG-67 AND ASN-261</scope>
</reference>
<reference key="3">
    <citation type="journal article" date="2003" name="Nature">
        <title>The DNA sequence and analysis of human chromosome 6.</title>
        <authorList>
            <person name="Mungall A.J."/>
            <person name="Palmer S.A."/>
            <person name="Sims S.K."/>
            <person name="Edwards C.A."/>
            <person name="Ashurst J.L."/>
            <person name="Wilming L."/>
            <person name="Jones M.C."/>
            <person name="Horton R."/>
            <person name="Hunt S.E."/>
            <person name="Scott C.E."/>
            <person name="Gilbert J.G.R."/>
            <person name="Clamp M.E."/>
            <person name="Bethel G."/>
            <person name="Milne S."/>
            <person name="Ainscough R."/>
            <person name="Almeida J.P."/>
            <person name="Ambrose K.D."/>
            <person name="Andrews T.D."/>
            <person name="Ashwell R.I.S."/>
            <person name="Babbage A.K."/>
            <person name="Bagguley C.L."/>
            <person name="Bailey J."/>
            <person name="Banerjee R."/>
            <person name="Barker D.J."/>
            <person name="Barlow K.F."/>
            <person name="Bates K."/>
            <person name="Beare D.M."/>
            <person name="Beasley H."/>
            <person name="Beasley O."/>
            <person name="Bird C.P."/>
            <person name="Blakey S.E."/>
            <person name="Bray-Allen S."/>
            <person name="Brook J."/>
            <person name="Brown A.J."/>
            <person name="Brown J.Y."/>
            <person name="Burford D.C."/>
            <person name="Burrill W."/>
            <person name="Burton J."/>
            <person name="Carder C."/>
            <person name="Carter N.P."/>
            <person name="Chapman J.C."/>
            <person name="Clark S.Y."/>
            <person name="Clark G."/>
            <person name="Clee C.M."/>
            <person name="Clegg S."/>
            <person name="Cobley V."/>
            <person name="Collier R.E."/>
            <person name="Collins J.E."/>
            <person name="Colman L.K."/>
            <person name="Corby N.R."/>
            <person name="Coville G.J."/>
            <person name="Culley K.M."/>
            <person name="Dhami P."/>
            <person name="Davies J."/>
            <person name="Dunn M."/>
            <person name="Earthrowl M.E."/>
            <person name="Ellington A.E."/>
            <person name="Evans K.A."/>
            <person name="Faulkner L."/>
            <person name="Francis M.D."/>
            <person name="Frankish A."/>
            <person name="Frankland J."/>
            <person name="French L."/>
            <person name="Garner P."/>
            <person name="Garnett J."/>
            <person name="Ghori M.J."/>
            <person name="Gilby L.M."/>
            <person name="Gillson C.J."/>
            <person name="Glithero R.J."/>
            <person name="Grafham D.V."/>
            <person name="Grant M."/>
            <person name="Gribble S."/>
            <person name="Griffiths C."/>
            <person name="Griffiths M.N.D."/>
            <person name="Hall R."/>
            <person name="Halls K.S."/>
            <person name="Hammond S."/>
            <person name="Harley J.L."/>
            <person name="Hart E.A."/>
            <person name="Heath P.D."/>
            <person name="Heathcott R."/>
            <person name="Holmes S.J."/>
            <person name="Howden P.J."/>
            <person name="Howe K.L."/>
            <person name="Howell G.R."/>
            <person name="Huckle E."/>
            <person name="Humphray S.J."/>
            <person name="Humphries M.D."/>
            <person name="Hunt A.R."/>
            <person name="Johnson C.M."/>
            <person name="Joy A.A."/>
            <person name="Kay M."/>
            <person name="Keenan S.J."/>
            <person name="Kimberley A.M."/>
            <person name="King A."/>
            <person name="Laird G.K."/>
            <person name="Langford C."/>
            <person name="Lawlor S."/>
            <person name="Leongamornlert D.A."/>
            <person name="Leversha M."/>
            <person name="Lloyd C.R."/>
            <person name="Lloyd D.M."/>
            <person name="Loveland J.E."/>
            <person name="Lovell J."/>
            <person name="Martin S."/>
            <person name="Mashreghi-Mohammadi M."/>
            <person name="Maslen G.L."/>
            <person name="Matthews L."/>
            <person name="McCann O.T."/>
            <person name="McLaren S.J."/>
            <person name="McLay K."/>
            <person name="McMurray A."/>
            <person name="Moore M.J.F."/>
            <person name="Mullikin J.C."/>
            <person name="Niblett D."/>
            <person name="Nickerson T."/>
            <person name="Novik K.L."/>
            <person name="Oliver K."/>
            <person name="Overton-Larty E.K."/>
            <person name="Parker A."/>
            <person name="Patel R."/>
            <person name="Pearce A.V."/>
            <person name="Peck A.I."/>
            <person name="Phillimore B.J.C.T."/>
            <person name="Phillips S."/>
            <person name="Plumb R.W."/>
            <person name="Porter K.M."/>
            <person name="Ramsey Y."/>
            <person name="Ranby S.A."/>
            <person name="Rice C.M."/>
            <person name="Ross M.T."/>
            <person name="Searle S.M."/>
            <person name="Sehra H.K."/>
            <person name="Sheridan E."/>
            <person name="Skuce C.D."/>
            <person name="Smith S."/>
            <person name="Smith M."/>
            <person name="Spraggon L."/>
            <person name="Squares S.L."/>
            <person name="Steward C.A."/>
            <person name="Sycamore N."/>
            <person name="Tamlyn-Hall G."/>
            <person name="Tester J."/>
            <person name="Theaker A.J."/>
            <person name="Thomas D.W."/>
            <person name="Thorpe A."/>
            <person name="Tracey A."/>
            <person name="Tromans A."/>
            <person name="Tubby B."/>
            <person name="Wall M."/>
            <person name="Wallis J.M."/>
            <person name="West A.P."/>
            <person name="White S.S."/>
            <person name="Whitehead S.L."/>
            <person name="Whittaker H."/>
            <person name="Wild A."/>
            <person name="Willey D.J."/>
            <person name="Wilmer T.E."/>
            <person name="Wood J.M."/>
            <person name="Wray P.W."/>
            <person name="Wyatt J.C."/>
            <person name="Young L."/>
            <person name="Younger R.M."/>
            <person name="Bentley D.R."/>
            <person name="Coulson A."/>
            <person name="Durbin R.M."/>
            <person name="Hubbard T."/>
            <person name="Sulston J.E."/>
            <person name="Dunham I."/>
            <person name="Rogers J."/>
            <person name="Beck S."/>
        </authorList>
    </citation>
    <scope>NUCLEOTIDE SEQUENCE [LARGE SCALE GENOMIC DNA]</scope>
</reference>
<reference key="4">
    <citation type="journal article" date="2004" name="Genome Res.">
        <title>The status, quality, and expansion of the NIH full-length cDNA project: the Mammalian Gene Collection (MGC).</title>
        <authorList>
            <consortium name="The MGC Project Team"/>
        </authorList>
    </citation>
    <scope>NUCLEOTIDE SEQUENCE [LARGE SCALE MRNA] (ISOFORM 2)</scope>
    <scope>VARIANT ASN-261</scope>
    <source>
        <tissue>Eye</tissue>
    </source>
</reference>
<reference key="5">
    <citation type="journal article" date="2005" name="Invest. Ophthalmol. Vis. Sci.">
        <title>Tubby-like protein 1 (TULP1) interacts with F-actin in photoreceptor cells.</title>
        <authorList>
            <person name="Xi Q."/>
            <person name="Pauer G.J.T."/>
            <person name="Marmorstein A.D."/>
            <person name="Crabb J.W."/>
            <person name="Hagstrom S.A."/>
        </authorList>
    </citation>
    <scope>FUNCTION</scope>
    <scope>INTERACTION WITH PHOSPHATIDYLINOSITOL PHOSPHOLIPIDS</scope>
    <scope>SUBCELLULAR LOCATION</scope>
    <scope>INTERACTION WITH F-ACTIN</scope>
</reference>
<reference key="6">
    <citation type="journal article" date="2010" name="Exp. Cell Res.">
        <title>Identification of tubby and tubby-like protein 1 as eat-me signals by phage display.</title>
        <authorList>
            <person name="Caberoy N.B."/>
            <person name="Maiguel D."/>
            <person name="Kim Y."/>
            <person name="Li W."/>
        </authorList>
    </citation>
    <scope>FUNCTION</scope>
    <scope>CHARACTERIZATION OF VARIANTS RP14 PRO-420; LYS-459; ARG-489 AND LEU-491</scope>
</reference>
<reference key="7">
    <citation type="submission" date="2009-02" db="PDB data bank">
        <title>Structure of human TULP1 in complex with IP3.</title>
        <authorList>
            <consortium name="Structural genomics consortium (SGC)"/>
        </authorList>
    </citation>
    <scope>X-RAY CRYSTALLOGRAPHY (1.8 ANGSTROMS) OF 291-536 IN COMPLEX WITH IP3</scope>
</reference>
<reference key="8">
    <citation type="journal article" date="1998" name="Lancet">
        <title>Tubby-like protein-1 mutations in autosomal recessive retinitis pigmentosa.</title>
        <authorList>
            <person name="Gu S."/>
            <person name="Lennon A."/>
            <person name="Li Y."/>
            <person name="Lorenz B."/>
            <person name="Fossarello M."/>
            <person name="North M."/>
            <person name="Gal A."/>
            <person name="Wright A."/>
        </authorList>
    </citation>
    <scope>VARIANTS RP14 120-GLU--ASP-127 DEL; ARG-489 AND THR-496</scope>
</reference>
<reference key="9">
    <citation type="journal article" date="1998" name="Nat. Genet.">
        <title>Recessive mutations in the gene encoding the tubby-like protein TULP1 in patients with retinitis pigmentosa.</title>
        <authorList>
            <person name="Hagstrom S.A."/>
            <person name="North M.A."/>
            <person name="Nishina P.M."/>
            <person name="Berson E.L."/>
            <person name="Dryja T.P."/>
        </authorList>
    </citation>
    <scope>VARIANTS RP14 PRO-420; LYS-459 AND LEU-491</scope>
</reference>
<reference key="10">
    <citation type="journal article" date="2004" name="Hum. Mutat.">
        <title>Leber congenital amaurosis: comprehensive survey of the genetic heterogeneity, refinement of the clinical definition, and genotype-phenotype correlations as a strategy for molecular diagnosis.</title>
        <authorList>
            <person name="Hanein S."/>
            <person name="Perrault I."/>
            <person name="Gerber S."/>
            <person name="Tanguy G."/>
            <person name="Barbet F."/>
            <person name="Ducroq D."/>
            <person name="Calvas P."/>
            <person name="Dollfus H."/>
            <person name="Hamel C."/>
            <person name="Lopponen T."/>
            <person name="Munier F."/>
            <person name="Santos L."/>
            <person name="Shalev S."/>
            <person name="Zafeiriou D."/>
            <person name="Dufier J.-L."/>
            <person name="Munnich A."/>
            <person name="Rozet J.-M."/>
            <person name="Kaplan J."/>
        </authorList>
    </citation>
    <scope>VARIANTS LCA15 TRP-368 AND TRP-400</scope>
</reference>
<reference key="11">
    <citation type="journal article" date="2004" name="Invest. Ophthalmol. Vis. Sci.">
        <title>A homozygosity-based search for mutations in patients with autosomal recessive retinitis pigmentosa, using microsatellite markers.</title>
        <authorList>
            <person name="Kondo H."/>
            <person name="Qin M."/>
            <person name="Mizota A."/>
            <person name="Kondo M."/>
            <person name="Hayashi H."/>
            <person name="Hayashi K."/>
            <person name="Oshima K."/>
            <person name="Tahira T."/>
            <person name="Hayashi K."/>
        </authorList>
    </citation>
    <scope>VARIANT RP14 SER-382</scope>
</reference>
<reference key="12">
    <citation type="journal article" date="2007" name="Arch. Ophthalmol.">
        <title>Novel compound heterozygous TULP1 mutations in a family with severe early-onset retinitis pigmentosa.</title>
        <authorList>
            <person name="den Hollander A.I."/>
            <person name="van Lith-Verhoeven J.J."/>
            <person name="Arends M.L."/>
            <person name="Strom T.M."/>
            <person name="Cremers F.P."/>
            <person name="Hoyng C.B."/>
        </authorList>
    </citation>
    <scope>VARIANT RP14 TRP-482</scope>
</reference>
<reference key="13">
    <citation type="journal article" date="2007" name="Invest. Ophthalmol. Vis. Sci.">
        <title>Novel TULP1 mutation causing Leber congenital amaurosis or early onset retinal degeneration.</title>
        <authorList>
            <person name="Mataftsi A."/>
            <person name="Schorderet D.F."/>
            <person name="Chachoua L."/>
            <person name="Boussalah M."/>
            <person name="Nouri M.T."/>
            <person name="Barthelmes D."/>
            <person name="Borruat F.X."/>
            <person name="Munier F.L."/>
        </authorList>
    </citation>
    <scope>VARIANT LCA15 PHE-ALA-529 INS</scope>
    <scope>VARIANTS THR-259; ASN-261 AND THR-496</scope>
</reference>
<organism>
    <name type="scientific">Homo sapiens</name>
    <name type="common">Human</name>
    <dbReference type="NCBI Taxonomy" id="9606"/>
    <lineage>
        <taxon>Eukaryota</taxon>
        <taxon>Metazoa</taxon>
        <taxon>Chordata</taxon>
        <taxon>Craniata</taxon>
        <taxon>Vertebrata</taxon>
        <taxon>Euteleostomi</taxon>
        <taxon>Mammalia</taxon>
        <taxon>Eutheria</taxon>
        <taxon>Euarchontoglires</taxon>
        <taxon>Primates</taxon>
        <taxon>Haplorrhini</taxon>
        <taxon>Catarrhini</taxon>
        <taxon>Hominidae</taxon>
        <taxon>Homo</taxon>
    </lineage>
</organism>
<proteinExistence type="evidence at protein level"/>
<name>TULP1_HUMAN</name>